<evidence type="ECO:0000255" key="1">
    <source>
        <dbReference type="HAMAP-Rule" id="MF_00693"/>
    </source>
</evidence>
<sequence length="242" mass="25981">MAGHSKWANIKHKKAAADAKRGKIWTRLIKEIQVAARLGGGDANSNPRLRLAVDKAADANMPKDNVKRAIDRGVGGADGANYEEIRYEGYGISGAAIIVDTLTDNRIRTVAEVRHAFSKFGGNMGTDGSVAFMFDHVGQFLFAPGTSEDALMEAALEAGADDVSTNDDGSIEVLCDWQAFSAVKDALEAAGFKAELAEVTMKPQNEVEFTGDDAAKMQKLLDALENLDDVQEVYTNAVIVEE</sequence>
<dbReference type="EMBL" id="CP000440">
    <property type="protein sequence ID" value="ABI87888.1"/>
    <property type="molecule type" value="Genomic_DNA"/>
</dbReference>
<dbReference type="RefSeq" id="WP_011657518.1">
    <property type="nucleotide sequence ID" value="NZ_CP009798.1"/>
</dbReference>
<dbReference type="SMR" id="Q0BD85"/>
<dbReference type="KEGG" id="bam:Bamb_2332"/>
<dbReference type="PATRIC" id="fig|339670.21.peg.2594"/>
<dbReference type="eggNOG" id="COG0217">
    <property type="taxonomic scope" value="Bacteria"/>
</dbReference>
<dbReference type="Proteomes" id="UP000000662">
    <property type="component" value="Chromosome 1"/>
</dbReference>
<dbReference type="GO" id="GO:0005829">
    <property type="term" value="C:cytosol"/>
    <property type="evidence" value="ECO:0007669"/>
    <property type="project" value="TreeGrafter"/>
</dbReference>
<dbReference type="GO" id="GO:0003677">
    <property type="term" value="F:DNA binding"/>
    <property type="evidence" value="ECO:0007669"/>
    <property type="project" value="UniProtKB-UniRule"/>
</dbReference>
<dbReference type="GO" id="GO:0006355">
    <property type="term" value="P:regulation of DNA-templated transcription"/>
    <property type="evidence" value="ECO:0007669"/>
    <property type="project" value="UniProtKB-UniRule"/>
</dbReference>
<dbReference type="FunFam" id="1.10.10.200:FF:000001">
    <property type="entry name" value="Probable transcriptional regulatory protein YebC"/>
    <property type="match status" value="1"/>
</dbReference>
<dbReference type="FunFam" id="3.30.70.980:FF:000002">
    <property type="entry name" value="Probable transcriptional regulatory protein YebC"/>
    <property type="match status" value="1"/>
</dbReference>
<dbReference type="Gene3D" id="1.10.10.200">
    <property type="match status" value="1"/>
</dbReference>
<dbReference type="Gene3D" id="3.30.70.980">
    <property type="match status" value="2"/>
</dbReference>
<dbReference type="HAMAP" id="MF_00693">
    <property type="entry name" value="Transcrip_reg_TACO1"/>
    <property type="match status" value="1"/>
</dbReference>
<dbReference type="InterPro" id="IPR017856">
    <property type="entry name" value="Integrase-like_N"/>
</dbReference>
<dbReference type="InterPro" id="IPR048300">
    <property type="entry name" value="TACO1_YebC-like_2nd/3rd_dom"/>
</dbReference>
<dbReference type="InterPro" id="IPR049083">
    <property type="entry name" value="TACO1_YebC_N"/>
</dbReference>
<dbReference type="InterPro" id="IPR002876">
    <property type="entry name" value="Transcrip_reg_TACO1-like"/>
</dbReference>
<dbReference type="InterPro" id="IPR026564">
    <property type="entry name" value="Transcrip_reg_TACO1-like_dom3"/>
</dbReference>
<dbReference type="InterPro" id="IPR029072">
    <property type="entry name" value="YebC-like"/>
</dbReference>
<dbReference type="NCBIfam" id="NF001030">
    <property type="entry name" value="PRK00110.1"/>
    <property type="match status" value="1"/>
</dbReference>
<dbReference type="NCBIfam" id="NF009044">
    <property type="entry name" value="PRK12378.1"/>
    <property type="match status" value="1"/>
</dbReference>
<dbReference type="NCBIfam" id="TIGR01033">
    <property type="entry name" value="YebC/PmpR family DNA-binding transcriptional regulator"/>
    <property type="match status" value="1"/>
</dbReference>
<dbReference type="PANTHER" id="PTHR12532:SF6">
    <property type="entry name" value="TRANSCRIPTIONAL REGULATORY PROTEIN YEBC-RELATED"/>
    <property type="match status" value="1"/>
</dbReference>
<dbReference type="PANTHER" id="PTHR12532">
    <property type="entry name" value="TRANSLATIONAL ACTIVATOR OF CYTOCHROME C OXIDASE 1"/>
    <property type="match status" value="1"/>
</dbReference>
<dbReference type="Pfam" id="PF20772">
    <property type="entry name" value="TACO1_YebC_N"/>
    <property type="match status" value="1"/>
</dbReference>
<dbReference type="Pfam" id="PF01709">
    <property type="entry name" value="Transcrip_reg"/>
    <property type="match status" value="1"/>
</dbReference>
<dbReference type="SUPFAM" id="SSF75625">
    <property type="entry name" value="YebC-like"/>
    <property type="match status" value="1"/>
</dbReference>
<comment type="subcellular location">
    <subcellularLocation>
        <location evidence="1">Cytoplasm</location>
    </subcellularLocation>
</comment>
<comment type="similarity">
    <text evidence="1">Belongs to the TACO1 family.</text>
</comment>
<proteinExistence type="inferred from homology"/>
<feature type="chain" id="PRO_1000045281" description="Probable transcriptional regulatory protein Bamb_2332">
    <location>
        <begin position="1"/>
        <end position="242"/>
    </location>
</feature>
<keyword id="KW-0963">Cytoplasm</keyword>
<keyword id="KW-0238">DNA-binding</keyword>
<keyword id="KW-0804">Transcription</keyword>
<keyword id="KW-0805">Transcription regulation</keyword>
<name>Y2332_BURCM</name>
<organism>
    <name type="scientific">Burkholderia ambifaria (strain ATCC BAA-244 / DSM 16087 / CCUG 44356 / LMG 19182 / AMMD)</name>
    <name type="common">Burkholderia cepacia (strain AMMD)</name>
    <dbReference type="NCBI Taxonomy" id="339670"/>
    <lineage>
        <taxon>Bacteria</taxon>
        <taxon>Pseudomonadati</taxon>
        <taxon>Pseudomonadota</taxon>
        <taxon>Betaproteobacteria</taxon>
        <taxon>Burkholderiales</taxon>
        <taxon>Burkholderiaceae</taxon>
        <taxon>Burkholderia</taxon>
        <taxon>Burkholderia cepacia complex</taxon>
    </lineage>
</organism>
<protein>
    <recommendedName>
        <fullName evidence="1">Probable transcriptional regulatory protein Bamb_2332</fullName>
    </recommendedName>
</protein>
<accession>Q0BD85</accession>
<reference key="1">
    <citation type="submission" date="2006-08" db="EMBL/GenBank/DDBJ databases">
        <title>Complete sequence of chromosome 1 of Burkholderia cepacia AMMD.</title>
        <authorList>
            <person name="Copeland A."/>
            <person name="Lucas S."/>
            <person name="Lapidus A."/>
            <person name="Barry K."/>
            <person name="Detter J.C."/>
            <person name="Glavina del Rio T."/>
            <person name="Hammon N."/>
            <person name="Israni S."/>
            <person name="Pitluck S."/>
            <person name="Bruce D."/>
            <person name="Chain P."/>
            <person name="Malfatti S."/>
            <person name="Shin M."/>
            <person name="Vergez L."/>
            <person name="Schmutz J."/>
            <person name="Larimer F."/>
            <person name="Land M."/>
            <person name="Hauser L."/>
            <person name="Kyrpides N."/>
            <person name="Kim E."/>
            <person name="Parke J."/>
            <person name="Coenye T."/>
            <person name="Konstantinidis K."/>
            <person name="Ramette A."/>
            <person name="Tiedje J."/>
            <person name="Richardson P."/>
        </authorList>
    </citation>
    <scope>NUCLEOTIDE SEQUENCE [LARGE SCALE GENOMIC DNA]</scope>
    <source>
        <strain>ATCC BAA-244 / DSM 16087 / CCUG 44356 / LMG 19182 / AMMD</strain>
    </source>
</reference>
<gene>
    <name type="ordered locus">Bamb_2332</name>
</gene>